<evidence type="ECO:0000255" key="1">
    <source>
        <dbReference type="HAMAP-Rule" id="MF_01620"/>
    </source>
</evidence>
<dbReference type="EC" id="2.3.1.16" evidence="1"/>
<dbReference type="EMBL" id="CP000753">
    <property type="protein sequence ID" value="ABS06188.1"/>
    <property type="molecule type" value="Genomic_DNA"/>
</dbReference>
<dbReference type="RefSeq" id="WP_006083808.1">
    <property type="nucleotide sequence ID" value="NC_009665.1"/>
</dbReference>
<dbReference type="SMR" id="A6WH99"/>
<dbReference type="GeneID" id="11770389"/>
<dbReference type="KEGG" id="sbm:Shew185_0015"/>
<dbReference type="HOGENOM" id="CLU_031026_2_3_6"/>
<dbReference type="UniPathway" id="UPA00659"/>
<dbReference type="GO" id="GO:0005737">
    <property type="term" value="C:cytoplasm"/>
    <property type="evidence" value="ECO:0007669"/>
    <property type="project" value="UniProtKB-SubCell"/>
</dbReference>
<dbReference type="GO" id="GO:0003988">
    <property type="term" value="F:acetyl-CoA C-acyltransferase activity"/>
    <property type="evidence" value="ECO:0007669"/>
    <property type="project" value="UniProtKB-UniRule"/>
</dbReference>
<dbReference type="GO" id="GO:0006635">
    <property type="term" value="P:fatty acid beta-oxidation"/>
    <property type="evidence" value="ECO:0007669"/>
    <property type="project" value="UniProtKB-UniRule"/>
</dbReference>
<dbReference type="GO" id="GO:0010124">
    <property type="term" value="P:phenylacetate catabolic process"/>
    <property type="evidence" value="ECO:0007669"/>
    <property type="project" value="TreeGrafter"/>
</dbReference>
<dbReference type="CDD" id="cd00751">
    <property type="entry name" value="thiolase"/>
    <property type="match status" value="1"/>
</dbReference>
<dbReference type="FunFam" id="3.40.47.10:FF:000010">
    <property type="entry name" value="Acetyl-CoA acetyltransferase (Thiolase)"/>
    <property type="match status" value="1"/>
</dbReference>
<dbReference type="Gene3D" id="3.40.47.10">
    <property type="match status" value="2"/>
</dbReference>
<dbReference type="HAMAP" id="MF_01620">
    <property type="entry name" value="FadA"/>
    <property type="match status" value="1"/>
</dbReference>
<dbReference type="InterPro" id="IPR012805">
    <property type="entry name" value="FadA"/>
</dbReference>
<dbReference type="InterPro" id="IPR002155">
    <property type="entry name" value="Thiolase"/>
</dbReference>
<dbReference type="InterPro" id="IPR016039">
    <property type="entry name" value="Thiolase-like"/>
</dbReference>
<dbReference type="InterPro" id="IPR050215">
    <property type="entry name" value="Thiolase-like_sf_Thiolase"/>
</dbReference>
<dbReference type="InterPro" id="IPR020615">
    <property type="entry name" value="Thiolase_acyl_enz_int_AS"/>
</dbReference>
<dbReference type="InterPro" id="IPR020610">
    <property type="entry name" value="Thiolase_AS"/>
</dbReference>
<dbReference type="InterPro" id="IPR020617">
    <property type="entry name" value="Thiolase_C"/>
</dbReference>
<dbReference type="InterPro" id="IPR020613">
    <property type="entry name" value="Thiolase_CS"/>
</dbReference>
<dbReference type="InterPro" id="IPR020616">
    <property type="entry name" value="Thiolase_N"/>
</dbReference>
<dbReference type="NCBIfam" id="TIGR01930">
    <property type="entry name" value="AcCoA-C-Actrans"/>
    <property type="match status" value="1"/>
</dbReference>
<dbReference type="NCBIfam" id="TIGR02445">
    <property type="entry name" value="fadA"/>
    <property type="match status" value="1"/>
</dbReference>
<dbReference type="NCBIfam" id="NF006510">
    <property type="entry name" value="PRK08947.1"/>
    <property type="match status" value="1"/>
</dbReference>
<dbReference type="PANTHER" id="PTHR43853:SF11">
    <property type="entry name" value="3-KETOACYL-COA THIOLASE FADA"/>
    <property type="match status" value="1"/>
</dbReference>
<dbReference type="PANTHER" id="PTHR43853">
    <property type="entry name" value="3-KETOACYL-COA THIOLASE, PEROXISOMAL"/>
    <property type="match status" value="1"/>
</dbReference>
<dbReference type="Pfam" id="PF02803">
    <property type="entry name" value="Thiolase_C"/>
    <property type="match status" value="1"/>
</dbReference>
<dbReference type="Pfam" id="PF00108">
    <property type="entry name" value="Thiolase_N"/>
    <property type="match status" value="1"/>
</dbReference>
<dbReference type="PIRSF" id="PIRSF000429">
    <property type="entry name" value="Ac-CoA_Ac_transf"/>
    <property type="match status" value="1"/>
</dbReference>
<dbReference type="SUPFAM" id="SSF53901">
    <property type="entry name" value="Thiolase-like"/>
    <property type="match status" value="2"/>
</dbReference>
<dbReference type="PROSITE" id="PS00098">
    <property type="entry name" value="THIOLASE_1"/>
    <property type="match status" value="1"/>
</dbReference>
<dbReference type="PROSITE" id="PS00737">
    <property type="entry name" value="THIOLASE_2"/>
    <property type="match status" value="1"/>
</dbReference>
<dbReference type="PROSITE" id="PS00099">
    <property type="entry name" value="THIOLASE_3"/>
    <property type="match status" value="1"/>
</dbReference>
<reference key="1">
    <citation type="submission" date="2007-07" db="EMBL/GenBank/DDBJ databases">
        <title>Complete sequence of chromosome of Shewanella baltica OS185.</title>
        <authorList>
            <consortium name="US DOE Joint Genome Institute"/>
            <person name="Copeland A."/>
            <person name="Lucas S."/>
            <person name="Lapidus A."/>
            <person name="Barry K."/>
            <person name="Glavina del Rio T."/>
            <person name="Dalin E."/>
            <person name="Tice H."/>
            <person name="Pitluck S."/>
            <person name="Sims D."/>
            <person name="Brettin T."/>
            <person name="Bruce D."/>
            <person name="Detter J.C."/>
            <person name="Han C."/>
            <person name="Schmutz J."/>
            <person name="Larimer F."/>
            <person name="Land M."/>
            <person name="Hauser L."/>
            <person name="Kyrpides N."/>
            <person name="Mikhailova N."/>
            <person name="Brettar I."/>
            <person name="Rodrigues J."/>
            <person name="Konstantinidis K."/>
            <person name="Tiedje J."/>
            <person name="Richardson P."/>
        </authorList>
    </citation>
    <scope>NUCLEOTIDE SEQUENCE [LARGE SCALE GENOMIC DNA]</scope>
    <source>
        <strain>OS185</strain>
    </source>
</reference>
<accession>A6WH99</accession>
<comment type="function">
    <text evidence="1">Catalyzes the final step of fatty acid oxidation in which acetyl-CoA is released and the CoA ester of a fatty acid two carbons shorter is formed.</text>
</comment>
<comment type="catalytic activity">
    <reaction evidence="1">
        <text>an acyl-CoA + acetyl-CoA = a 3-oxoacyl-CoA + CoA</text>
        <dbReference type="Rhea" id="RHEA:21564"/>
        <dbReference type="ChEBI" id="CHEBI:57287"/>
        <dbReference type="ChEBI" id="CHEBI:57288"/>
        <dbReference type="ChEBI" id="CHEBI:58342"/>
        <dbReference type="ChEBI" id="CHEBI:90726"/>
        <dbReference type="EC" id="2.3.1.16"/>
    </reaction>
</comment>
<comment type="pathway">
    <text evidence="1">Lipid metabolism; fatty acid beta-oxidation.</text>
</comment>
<comment type="subunit">
    <text evidence="1">Heterotetramer of two alpha chains (FadB) and two beta chains (FadA).</text>
</comment>
<comment type="subcellular location">
    <subcellularLocation>
        <location evidence="1">Cytoplasm</location>
    </subcellularLocation>
</comment>
<comment type="similarity">
    <text evidence="1">Belongs to the thiolase-like superfamily. Thiolase family.</text>
</comment>
<organism>
    <name type="scientific">Shewanella baltica (strain OS185)</name>
    <dbReference type="NCBI Taxonomy" id="402882"/>
    <lineage>
        <taxon>Bacteria</taxon>
        <taxon>Pseudomonadati</taxon>
        <taxon>Pseudomonadota</taxon>
        <taxon>Gammaproteobacteria</taxon>
        <taxon>Alteromonadales</taxon>
        <taxon>Shewanellaceae</taxon>
        <taxon>Shewanella</taxon>
    </lineage>
</organism>
<keyword id="KW-0012">Acyltransferase</keyword>
<keyword id="KW-0963">Cytoplasm</keyword>
<keyword id="KW-0276">Fatty acid metabolism</keyword>
<keyword id="KW-0442">Lipid degradation</keyword>
<keyword id="KW-0443">Lipid metabolism</keyword>
<keyword id="KW-0808">Transferase</keyword>
<name>FADA_SHEB8</name>
<feature type="chain" id="PRO_0000323554" description="3-ketoacyl-CoA thiolase">
    <location>
        <begin position="1"/>
        <end position="387"/>
    </location>
</feature>
<feature type="active site" description="Acyl-thioester intermediate" evidence="1">
    <location>
        <position position="91"/>
    </location>
</feature>
<feature type="active site" description="Proton acceptor" evidence="1">
    <location>
        <position position="343"/>
    </location>
</feature>
<feature type="active site" description="Proton acceptor" evidence="1">
    <location>
        <position position="373"/>
    </location>
</feature>
<proteinExistence type="inferred from homology"/>
<sequence length="387" mass="40576">MKQAVIVDCIRTPMGRSKAGVFRNVRAETLSAELMKGLLLRNPQLDPNLIEDVIWGCVQQTLEQGFNIARNASLLAGIPKTAGAVTVNRLCGSSMDAIHQAARAIMTGMGDTFIIGGVEHMGHVPMSHGVDFHPGLANNVAKASGMMGLTAEMLGKLHGITREQQDAFAVRSHQRAYAATVEGRFAKEIYGIEGHDANGALIKVLQDEVIRPETTMESLAALRPVFDPVNGTVTAGTSSALSDGASAMLIMEESKARALGLPIRARIRSMAVAGCDAAIMGYGPVPATQKALARAGITVADLDVIELNEAFAAQSLPCVKDLGLADVVDDKINLNGGAIALGHPLGCSGARISTTLINLMEDKDATLGLATMCIGLGQGIATVFERV</sequence>
<protein>
    <recommendedName>
        <fullName evidence="1">3-ketoacyl-CoA thiolase</fullName>
        <ecNumber evidence="1">2.3.1.16</ecNumber>
    </recommendedName>
    <alternativeName>
        <fullName evidence="1">Acetyl-CoA acyltransferase</fullName>
    </alternativeName>
    <alternativeName>
        <fullName evidence="1">Beta-ketothiolase</fullName>
    </alternativeName>
    <alternativeName>
        <fullName evidence="1">Fatty acid oxidation complex subunit beta</fullName>
    </alternativeName>
</protein>
<gene>
    <name evidence="1" type="primary">fadA</name>
    <name type="ordered locus">Shew185_0015</name>
</gene>